<evidence type="ECO:0000250" key="1">
    <source>
        <dbReference type="UniProtKB" id="Q9RXV7"/>
    </source>
</evidence>
<evidence type="ECO:0000255" key="2"/>
<evidence type="ECO:0000269" key="3">
    <source>
    </source>
</evidence>
<evidence type="ECO:0000303" key="4">
    <source>
    </source>
</evidence>
<evidence type="ECO:0000305" key="5"/>
<evidence type="ECO:0000312" key="6">
    <source>
        <dbReference type="EMBL" id="AAC63670.2"/>
    </source>
</evidence>
<evidence type="ECO:0000312" key="7">
    <source>
        <dbReference type="EMBL" id="AEC07518.1"/>
    </source>
</evidence>
<gene>
    <name evidence="4" type="primary">STIC2</name>
    <name evidence="7" type="ordered locus">At2g24020</name>
    <name evidence="6" type="ORF">T29E15.22</name>
</gene>
<name>EBFC2_ARATH</name>
<protein>
    <recommendedName>
        <fullName evidence="5">Nucleoid-associated protein At2g24020, chloroplastic</fullName>
    </recommendedName>
    <alternativeName>
        <fullName evidence="4">Suppressor of tic40 protein 2</fullName>
    </alternativeName>
</protein>
<organism>
    <name type="scientific">Arabidopsis thaliana</name>
    <name type="common">Mouse-ear cress</name>
    <dbReference type="NCBI Taxonomy" id="3702"/>
    <lineage>
        <taxon>Eukaryota</taxon>
        <taxon>Viridiplantae</taxon>
        <taxon>Streptophyta</taxon>
        <taxon>Embryophyta</taxon>
        <taxon>Tracheophyta</taxon>
        <taxon>Spermatophyta</taxon>
        <taxon>Magnoliopsida</taxon>
        <taxon>eudicotyledons</taxon>
        <taxon>Gunneridae</taxon>
        <taxon>Pentapetalae</taxon>
        <taxon>rosids</taxon>
        <taxon>malvids</taxon>
        <taxon>Brassicales</taxon>
        <taxon>Brassicaceae</taxon>
        <taxon>Camelineae</taxon>
        <taxon>Arabidopsis</taxon>
    </lineage>
</organism>
<reference key="1">
    <citation type="journal article" date="1999" name="Nature">
        <title>Sequence and analysis of chromosome 2 of the plant Arabidopsis thaliana.</title>
        <authorList>
            <person name="Lin X."/>
            <person name="Kaul S."/>
            <person name="Rounsley S.D."/>
            <person name="Shea T.P."/>
            <person name="Benito M.-I."/>
            <person name="Town C.D."/>
            <person name="Fujii C.Y."/>
            <person name="Mason T.M."/>
            <person name="Bowman C.L."/>
            <person name="Barnstead M.E."/>
            <person name="Feldblyum T.V."/>
            <person name="Buell C.R."/>
            <person name="Ketchum K.A."/>
            <person name="Lee J.J."/>
            <person name="Ronning C.M."/>
            <person name="Koo H.L."/>
            <person name="Moffat K.S."/>
            <person name="Cronin L.A."/>
            <person name="Shen M."/>
            <person name="Pai G."/>
            <person name="Van Aken S."/>
            <person name="Umayam L."/>
            <person name="Tallon L.J."/>
            <person name="Gill J.E."/>
            <person name="Adams M.D."/>
            <person name="Carrera A.J."/>
            <person name="Creasy T.H."/>
            <person name="Goodman H.M."/>
            <person name="Somerville C.R."/>
            <person name="Copenhaver G.P."/>
            <person name="Preuss D."/>
            <person name="Nierman W.C."/>
            <person name="White O."/>
            <person name="Eisen J.A."/>
            <person name="Salzberg S.L."/>
            <person name="Fraser C.M."/>
            <person name="Venter J.C."/>
        </authorList>
    </citation>
    <scope>NUCLEOTIDE SEQUENCE [LARGE SCALE GENOMIC DNA]</scope>
    <source>
        <strain>cv. Columbia</strain>
    </source>
</reference>
<reference key="2">
    <citation type="journal article" date="2017" name="Plant J.">
        <title>Araport11: a complete reannotation of the Arabidopsis thaliana reference genome.</title>
        <authorList>
            <person name="Cheng C.Y."/>
            <person name="Krishnakumar V."/>
            <person name="Chan A.P."/>
            <person name="Thibaud-Nissen F."/>
            <person name="Schobel S."/>
            <person name="Town C.D."/>
        </authorList>
    </citation>
    <scope>GENOME REANNOTATION</scope>
    <source>
        <strain>cv. Columbia</strain>
    </source>
</reference>
<reference key="3">
    <citation type="journal article" date="2003" name="Science">
        <title>Empirical analysis of transcriptional activity in the Arabidopsis genome.</title>
        <authorList>
            <person name="Yamada K."/>
            <person name="Lim J."/>
            <person name="Dale J.M."/>
            <person name="Chen H."/>
            <person name="Shinn P."/>
            <person name="Palm C.J."/>
            <person name="Southwick A.M."/>
            <person name="Wu H.C."/>
            <person name="Kim C.J."/>
            <person name="Nguyen M."/>
            <person name="Pham P.K."/>
            <person name="Cheuk R.F."/>
            <person name="Karlin-Newmann G."/>
            <person name="Liu S.X."/>
            <person name="Lam B."/>
            <person name="Sakano H."/>
            <person name="Wu T."/>
            <person name="Yu G."/>
            <person name="Miranda M."/>
            <person name="Quach H.L."/>
            <person name="Tripp M."/>
            <person name="Chang C.H."/>
            <person name="Lee J.M."/>
            <person name="Toriumi M.J."/>
            <person name="Chan M.M."/>
            <person name="Tang C.C."/>
            <person name="Onodera C.S."/>
            <person name="Deng J.M."/>
            <person name="Akiyama K."/>
            <person name="Ansari Y."/>
            <person name="Arakawa T."/>
            <person name="Banh J."/>
            <person name="Banno F."/>
            <person name="Bowser L."/>
            <person name="Brooks S.Y."/>
            <person name="Carninci P."/>
            <person name="Chao Q."/>
            <person name="Choy N."/>
            <person name="Enju A."/>
            <person name="Goldsmith A.D."/>
            <person name="Gurjal M."/>
            <person name="Hansen N.F."/>
            <person name="Hayashizaki Y."/>
            <person name="Johnson-Hopson C."/>
            <person name="Hsuan V.W."/>
            <person name="Iida K."/>
            <person name="Karnes M."/>
            <person name="Khan S."/>
            <person name="Koesema E."/>
            <person name="Ishida J."/>
            <person name="Jiang P.X."/>
            <person name="Jones T."/>
            <person name="Kawai J."/>
            <person name="Kamiya A."/>
            <person name="Meyers C."/>
            <person name="Nakajima M."/>
            <person name="Narusaka M."/>
            <person name="Seki M."/>
            <person name="Sakurai T."/>
            <person name="Satou M."/>
            <person name="Tamse R."/>
            <person name="Vaysberg M."/>
            <person name="Wallender E.K."/>
            <person name="Wong C."/>
            <person name="Yamamura Y."/>
            <person name="Yuan S."/>
            <person name="Shinozaki K."/>
            <person name="Davis R.W."/>
            <person name="Theologis A."/>
            <person name="Ecker J.R."/>
        </authorList>
    </citation>
    <scope>NUCLEOTIDE SEQUENCE [LARGE SCALE MRNA] (ISOFORM 1)</scope>
    <source>
        <strain>cv. Columbia</strain>
    </source>
</reference>
<reference key="4">
    <citation type="journal article" date="2017" name="Plant Cell">
        <title>Suppressors of the chloroplast protein import mutant tic40 reveal a genetic link between protein import and thylakoid biogenesis.</title>
        <authorList>
            <person name="Bedard J."/>
            <person name="Troesch R."/>
            <person name="Wu F."/>
            <person name="Ling Q."/>
            <person name="Flores-Perez U."/>
            <person name="Toepel M."/>
            <person name="Nawaz F."/>
            <person name="Jarvis P."/>
        </authorList>
    </citation>
    <scope>FUNCTION</scope>
    <scope>HOMODIMERIZATION</scope>
    <scope>INTERACTION WITH ALB3 AND ALB4</scope>
    <scope>SUBCELLULAR LOCATION</scope>
    <scope>DISRUPTION PHENOTYPE</scope>
</reference>
<keyword id="KW-0025">Alternative splicing</keyword>
<keyword id="KW-0150">Chloroplast</keyword>
<keyword id="KW-0238">DNA-binding</keyword>
<keyword id="KW-0934">Plastid</keyword>
<keyword id="KW-1185">Reference proteome</keyword>
<keyword id="KW-0809">Transit peptide</keyword>
<accession>O82230</accession>
<accession>F4INP2</accession>
<accession>Q94AE8</accession>
<proteinExistence type="evidence at protein level"/>
<dbReference type="EMBL" id="AC005170">
    <property type="protein sequence ID" value="AAC63670.2"/>
    <property type="molecule type" value="Genomic_DNA"/>
</dbReference>
<dbReference type="EMBL" id="CP002685">
    <property type="protein sequence ID" value="AEC07518.1"/>
    <property type="molecule type" value="Genomic_DNA"/>
</dbReference>
<dbReference type="EMBL" id="CP002685">
    <property type="protein sequence ID" value="AEC07519.1"/>
    <property type="molecule type" value="Genomic_DNA"/>
</dbReference>
<dbReference type="EMBL" id="AY048234">
    <property type="protein sequence ID" value="AAK82497.1"/>
    <property type="molecule type" value="mRNA"/>
</dbReference>
<dbReference type="EMBL" id="AY091702">
    <property type="protein sequence ID" value="AAM10301.1"/>
    <property type="molecule type" value="mRNA"/>
</dbReference>
<dbReference type="PIR" id="F84631">
    <property type="entry name" value="F84631"/>
</dbReference>
<dbReference type="RefSeq" id="NP_001189586.1">
    <molecule id="O82230-2"/>
    <property type="nucleotide sequence ID" value="NM_001202657.1"/>
</dbReference>
<dbReference type="RefSeq" id="NP_565561.1">
    <molecule id="O82230-1"/>
    <property type="nucleotide sequence ID" value="NM_127964.5"/>
</dbReference>
<dbReference type="SMR" id="O82230"/>
<dbReference type="FunCoup" id="O82230">
    <property type="interactions" value="1106"/>
</dbReference>
<dbReference type="IntAct" id="O82230">
    <property type="interactions" value="14"/>
</dbReference>
<dbReference type="STRING" id="3702.O82230"/>
<dbReference type="MetOSite" id="O82230"/>
<dbReference type="PaxDb" id="3702-AT2G24020.1"/>
<dbReference type="ProteomicsDB" id="221962">
    <molecule id="O82230-1"/>
</dbReference>
<dbReference type="EnsemblPlants" id="AT2G24020.1">
    <molecule id="O82230-1"/>
    <property type="protein sequence ID" value="AT2G24020.1"/>
    <property type="gene ID" value="AT2G24020"/>
</dbReference>
<dbReference type="EnsemblPlants" id="AT2G24020.2">
    <molecule id="O82230-2"/>
    <property type="protein sequence ID" value="AT2G24020.2"/>
    <property type="gene ID" value="AT2G24020"/>
</dbReference>
<dbReference type="GeneID" id="816936"/>
<dbReference type="Gramene" id="AT2G24020.1">
    <molecule id="O82230-1"/>
    <property type="protein sequence ID" value="AT2G24020.1"/>
    <property type="gene ID" value="AT2G24020"/>
</dbReference>
<dbReference type="Gramene" id="AT2G24020.2">
    <molecule id="O82230-2"/>
    <property type="protein sequence ID" value="AT2G24020.2"/>
    <property type="gene ID" value="AT2G24020"/>
</dbReference>
<dbReference type="KEGG" id="ath:AT2G24020"/>
<dbReference type="Araport" id="AT2G24020"/>
<dbReference type="TAIR" id="AT2G24020">
    <property type="gene designation" value="STIC2"/>
</dbReference>
<dbReference type="eggNOG" id="KOG0017">
    <property type="taxonomic scope" value="Eukaryota"/>
</dbReference>
<dbReference type="InParanoid" id="O82230"/>
<dbReference type="OMA" id="QMIVQVE"/>
<dbReference type="OrthoDB" id="2020094at2759"/>
<dbReference type="PhylomeDB" id="O82230"/>
<dbReference type="PRO" id="PR:O82230"/>
<dbReference type="Proteomes" id="UP000006548">
    <property type="component" value="Chromosome 2"/>
</dbReference>
<dbReference type="ExpressionAtlas" id="O82230">
    <property type="expression patterns" value="baseline and differential"/>
</dbReference>
<dbReference type="GO" id="GO:0009507">
    <property type="term" value="C:chloroplast"/>
    <property type="evidence" value="ECO:0007005"/>
    <property type="project" value="TAIR"/>
</dbReference>
<dbReference type="GO" id="GO:0009941">
    <property type="term" value="C:chloroplast envelope"/>
    <property type="evidence" value="ECO:0007005"/>
    <property type="project" value="TAIR"/>
</dbReference>
<dbReference type="GO" id="GO:0009570">
    <property type="term" value="C:chloroplast stroma"/>
    <property type="evidence" value="ECO:0000314"/>
    <property type="project" value="TAIR"/>
</dbReference>
<dbReference type="GO" id="GO:0009535">
    <property type="term" value="C:chloroplast thylakoid membrane"/>
    <property type="evidence" value="ECO:0007005"/>
    <property type="project" value="TAIR"/>
</dbReference>
<dbReference type="GO" id="GO:0005773">
    <property type="term" value="C:vacuole"/>
    <property type="evidence" value="ECO:0007005"/>
    <property type="project" value="TAIR"/>
</dbReference>
<dbReference type="GO" id="GO:0003677">
    <property type="term" value="F:DNA binding"/>
    <property type="evidence" value="ECO:0007669"/>
    <property type="project" value="UniProtKB-KW"/>
</dbReference>
<dbReference type="GO" id="GO:0045037">
    <property type="term" value="P:protein import into chloroplast stroma"/>
    <property type="evidence" value="ECO:0000316"/>
    <property type="project" value="TAIR"/>
</dbReference>
<dbReference type="FunFam" id="3.30.1310.10:FF:000004">
    <property type="entry name" value="Nucleoid-associated protein, chloroplastic"/>
    <property type="match status" value="1"/>
</dbReference>
<dbReference type="Gene3D" id="3.30.1310.10">
    <property type="entry name" value="Nucleoid-associated protein YbaB-like domain"/>
    <property type="match status" value="1"/>
</dbReference>
<dbReference type="InterPro" id="IPR036894">
    <property type="entry name" value="YbaB-like_sf"/>
</dbReference>
<dbReference type="InterPro" id="IPR004401">
    <property type="entry name" value="YbaB/EbfC"/>
</dbReference>
<dbReference type="NCBIfam" id="TIGR00103">
    <property type="entry name" value="DNA_YbaB_EbfC"/>
    <property type="match status" value="1"/>
</dbReference>
<dbReference type="PANTHER" id="PTHR33449">
    <property type="entry name" value="NUCLEOID-ASSOCIATED PROTEIN YBAB"/>
    <property type="match status" value="1"/>
</dbReference>
<dbReference type="PANTHER" id="PTHR33449:SF1">
    <property type="entry name" value="NUCLEOID-ASSOCIATED PROTEIN YBAB"/>
    <property type="match status" value="1"/>
</dbReference>
<dbReference type="Pfam" id="PF02575">
    <property type="entry name" value="YbaB_DNA_bd"/>
    <property type="match status" value="1"/>
</dbReference>
<dbReference type="SUPFAM" id="SSF82607">
    <property type="entry name" value="YbaB-like"/>
    <property type="match status" value="1"/>
</dbReference>
<comment type="function">
    <text evidence="1 3">Participates with ALB4 in thylakoid protein targeting. May function with specific subset of thylakoidal proteins (PubMed:28684427). Binds to DNA and alters its conformation. May be involved in regulation of gene expression, nucleoid organization and DNA protection (By similarity).</text>
</comment>
<comment type="subunit">
    <text evidence="3">Homodimer. Interacts with ALB3 and ALB4.</text>
</comment>
<comment type="interaction">
    <interactant intactId="EBI-4428759">
        <id>O82230</id>
    </interactant>
    <interactant intactId="EBI-1806831">
        <id>Q8LBP4</id>
        <label>ALB3</label>
    </interactant>
    <organismsDiffer>false</organismsDiffer>
    <experiments>4</experiments>
</comment>
<comment type="interaction">
    <interactant intactId="EBI-4428759">
        <id>O82230</id>
    </interactant>
    <interactant intactId="EBI-16630560">
        <id>Q9FYL3</id>
        <label>ALB4</label>
    </interactant>
    <organismsDiffer>false</organismsDiffer>
    <experiments>4</experiments>
</comment>
<comment type="subcellular location">
    <subcellularLocation>
        <location evidence="3">Plastid</location>
        <location evidence="3">Chloroplast stroma</location>
    </subcellularLocation>
</comment>
<comment type="alternative products">
    <event type="alternative splicing"/>
    <isoform>
        <id>O82230-1</id>
        <name>1</name>
        <sequence type="displayed"/>
    </isoform>
    <isoform>
        <id>O82230-2</id>
        <name>2</name>
        <sequence type="described" ref="VSP_057979"/>
    </isoform>
</comment>
<comment type="disruption phenotype">
    <text evidence="3">No visible macroscopic phenotype under normal growth condtions. Increased number of plastoglobules (lipid bodies) in chloroplasts.</text>
</comment>
<comment type="similarity">
    <text evidence="5">Belongs to the YbaB/EbfC family.</text>
</comment>
<sequence>MASMAATTNFTKSMLFPFSHVSGNASLNSQRRTWPKQYKSKNGYRSLRVNGLFGGGNKDNNSEDGQSKAGIFGNMQNMYETVKKAQMVVQVEAVRVQKELAAAEFDGYCAGELVKVTLSGNQQPIRTDITEAAMELGSEKLSQLVTEAYKDAHAKSVVAMKERMSDLAQSLGMPPGLSEGMK</sequence>
<feature type="transit peptide" description="Chloroplast" evidence="2">
    <location>
        <begin position="1"/>
        <end position="48"/>
    </location>
</feature>
<feature type="chain" id="PRO_0000434790" description="Nucleoid-associated protein At2g24020, chloroplastic" evidence="2">
    <location>
        <begin position="49"/>
        <end position="182"/>
    </location>
</feature>
<feature type="splice variant" id="VSP_057979" description="In isoform 2.">
    <location>
        <begin position="21"/>
        <end position="22"/>
    </location>
</feature>